<organism>
    <name type="scientific">Candida glabrata (strain ATCC 2001 / BCRC 20586 / JCM 3761 / NBRC 0622 / NRRL Y-65 / CBS 138)</name>
    <name type="common">Yeast</name>
    <name type="synonym">Nakaseomyces glabratus</name>
    <dbReference type="NCBI Taxonomy" id="284593"/>
    <lineage>
        <taxon>Eukaryota</taxon>
        <taxon>Fungi</taxon>
        <taxon>Dikarya</taxon>
        <taxon>Ascomycota</taxon>
        <taxon>Saccharomycotina</taxon>
        <taxon>Saccharomycetes</taxon>
        <taxon>Saccharomycetales</taxon>
        <taxon>Saccharomycetaceae</taxon>
        <taxon>Nakaseomyces</taxon>
    </lineage>
</organism>
<gene>
    <name evidence="1" type="primary">RRP3</name>
    <name type="ordered locus">CAGL0J10912g</name>
</gene>
<keyword id="KW-0067">ATP-binding</keyword>
<keyword id="KW-0347">Helicase</keyword>
<keyword id="KW-0378">Hydrolase</keyword>
<keyword id="KW-0547">Nucleotide-binding</keyword>
<keyword id="KW-0539">Nucleus</keyword>
<keyword id="KW-1185">Reference proteome</keyword>
<keyword id="KW-0690">Ribosome biogenesis</keyword>
<keyword id="KW-0694">RNA-binding</keyword>
<keyword id="KW-0698">rRNA processing</keyword>
<accession>Q6FNK8</accession>
<dbReference type="EC" id="3.6.4.13" evidence="1"/>
<dbReference type="EMBL" id="CR380956">
    <property type="protein sequence ID" value="CAG61137.1"/>
    <property type="molecule type" value="Genomic_DNA"/>
</dbReference>
<dbReference type="RefSeq" id="XP_448186.1">
    <property type="nucleotide sequence ID" value="XM_448186.1"/>
</dbReference>
<dbReference type="SMR" id="Q6FNK8"/>
<dbReference type="FunCoup" id="Q6FNK8">
    <property type="interactions" value="1223"/>
</dbReference>
<dbReference type="STRING" id="284593.Q6FNK8"/>
<dbReference type="EnsemblFungi" id="CAGL0J10912g-T">
    <property type="protein sequence ID" value="CAGL0J10912g-T-p1"/>
    <property type="gene ID" value="CAGL0J10912g"/>
</dbReference>
<dbReference type="KEGG" id="cgr:2889515"/>
<dbReference type="CGD" id="CAL0132836">
    <property type="gene designation" value="CAGL0J10912g"/>
</dbReference>
<dbReference type="VEuPathDB" id="FungiDB:B1J91_J10912g"/>
<dbReference type="VEuPathDB" id="FungiDB:CAGL0J10912g"/>
<dbReference type="eggNOG" id="KOG0330">
    <property type="taxonomic scope" value="Eukaryota"/>
</dbReference>
<dbReference type="HOGENOM" id="CLU_003041_1_1_1"/>
<dbReference type="InParanoid" id="Q6FNK8"/>
<dbReference type="OMA" id="GIGIKCC"/>
<dbReference type="Proteomes" id="UP000002428">
    <property type="component" value="Chromosome J"/>
</dbReference>
<dbReference type="GO" id="GO:0005829">
    <property type="term" value="C:cytosol"/>
    <property type="evidence" value="ECO:0007669"/>
    <property type="project" value="TreeGrafter"/>
</dbReference>
<dbReference type="GO" id="GO:0005730">
    <property type="term" value="C:nucleolus"/>
    <property type="evidence" value="ECO:0007669"/>
    <property type="project" value="EnsemblFungi"/>
</dbReference>
<dbReference type="GO" id="GO:0032040">
    <property type="term" value="C:small-subunit processome"/>
    <property type="evidence" value="ECO:0007669"/>
    <property type="project" value="EnsemblFungi"/>
</dbReference>
<dbReference type="GO" id="GO:0005524">
    <property type="term" value="F:ATP binding"/>
    <property type="evidence" value="ECO:0007669"/>
    <property type="project" value="UniProtKB-KW"/>
</dbReference>
<dbReference type="GO" id="GO:0016887">
    <property type="term" value="F:ATP hydrolysis activity"/>
    <property type="evidence" value="ECO:0007669"/>
    <property type="project" value="RHEA"/>
</dbReference>
<dbReference type="GO" id="GO:0003723">
    <property type="term" value="F:RNA binding"/>
    <property type="evidence" value="ECO:0007669"/>
    <property type="project" value="UniProtKB-KW"/>
</dbReference>
<dbReference type="GO" id="GO:0003724">
    <property type="term" value="F:RNA helicase activity"/>
    <property type="evidence" value="ECO:0007669"/>
    <property type="project" value="UniProtKB-EC"/>
</dbReference>
<dbReference type="GO" id="GO:0000462">
    <property type="term" value="P:maturation of SSU-rRNA from tricistronic rRNA transcript (SSU-rRNA, 5.8S rRNA, LSU-rRNA)"/>
    <property type="evidence" value="ECO:0007669"/>
    <property type="project" value="EnsemblFungi"/>
</dbReference>
<dbReference type="CDD" id="cd17954">
    <property type="entry name" value="DEADc_DDX47"/>
    <property type="match status" value="1"/>
</dbReference>
<dbReference type="CDD" id="cd18787">
    <property type="entry name" value="SF2_C_DEAD"/>
    <property type="match status" value="1"/>
</dbReference>
<dbReference type="FunFam" id="3.40.50.300:FF:000626">
    <property type="entry name" value="probable ATP-dependent RNA helicase DDX47"/>
    <property type="match status" value="1"/>
</dbReference>
<dbReference type="Gene3D" id="3.40.50.300">
    <property type="entry name" value="P-loop containing nucleotide triphosphate hydrolases"/>
    <property type="match status" value="2"/>
</dbReference>
<dbReference type="InterPro" id="IPR044765">
    <property type="entry name" value="DDX47/Rrp3_DEADc"/>
</dbReference>
<dbReference type="InterPro" id="IPR011545">
    <property type="entry name" value="DEAD/DEAH_box_helicase_dom"/>
</dbReference>
<dbReference type="InterPro" id="IPR050079">
    <property type="entry name" value="DEAD_box_RNA_helicase"/>
</dbReference>
<dbReference type="InterPro" id="IPR014001">
    <property type="entry name" value="Helicase_ATP-bd"/>
</dbReference>
<dbReference type="InterPro" id="IPR001650">
    <property type="entry name" value="Helicase_C-like"/>
</dbReference>
<dbReference type="InterPro" id="IPR027417">
    <property type="entry name" value="P-loop_NTPase"/>
</dbReference>
<dbReference type="InterPro" id="IPR000629">
    <property type="entry name" value="RNA-helicase_DEAD-box_CS"/>
</dbReference>
<dbReference type="InterPro" id="IPR014014">
    <property type="entry name" value="RNA_helicase_DEAD_Q_motif"/>
</dbReference>
<dbReference type="PANTHER" id="PTHR47959:SF24">
    <property type="entry name" value="ATP-DEPENDENT RNA HELICASE"/>
    <property type="match status" value="1"/>
</dbReference>
<dbReference type="PANTHER" id="PTHR47959">
    <property type="entry name" value="ATP-DEPENDENT RNA HELICASE RHLE-RELATED"/>
    <property type="match status" value="1"/>
</dbReference>
<dbReference type="Pfam" id="PF00270">
    <property type="entry name" value="DEAD"/>
    <property type="match status" value="1"/>
</dbReference>
<dbReference type="Pfam" id="PF00271">
    <property type="entry name" value="Helicase_C"/>
    <property type="match status" value="1"/>
</dbReference>
<dbReference type="SMART" id="SM00487">
    <property type="entry name" value="DEXDc"/>
    <property type="match status" value="1"/>
</dbReference>
<dbReference type="SMART" id="SM00490">
    <property type="entry name" value="HELICc"/>
    <property type="match status" value="1"/>
</dbReference>
<dbReference type="SUPFAM" id="SSF52540">
    <property type="entry name" value="P-loop containing nucleoside triphosphate hydrolases"/>
    <property type="match status" value="1"/>
</dbReference>
<dbReference type="PROSITE" id="PS00039">
    <property type="entry name" value="DEAD_ATP_HELICASE"/>
    <property type="match status" value="1"/>
</dbReference>
<dbReference type="PROSITE" id="PS51192">
    <property type="entry name" value="HELICASE_ATP_BIND_1"/>
    <property type="match status" value="1"/>
</dbReference>
<dbReference type="PROSITE" id="PS51194">
    <property type="entry name" value="HELICASE_CTER"/>
    <property type="match status" value="1"/>
</dbReference>
<dbReference type="PROSITE" id="PS51195">
    <property type="entry name" value="Q_MOTIF"/>
    <property type="match status" value="1"/>
</dbReference>
<comment type="function">
    <text evidence="1">ATP-dependent rRNA helicase required for pre-ribosomal RNA processing. Involved in the maturation of the 35S-pre-rRNA and to its cleavage to mature 18S rRNA.</text>
</comment>
<comment type="catalytic activity">
    <reaction evidence="1">
        <text>ATP + H2O = ADP + phosphate + H(+)</text>
        <dbReference type="Rhea" id="RHEA:13065"/>
        <dbReference type="ChEBI" id="CHEBI:15377"/>
        <dbReference type="ChEBI" id="CHEBI:15378"/>
        <dbReference type="ChEBI" id="CHEBI:30616"/>
        <dbReference type="ChEBI" id="CHEBI:43474"/>
        <dbReference type="ChEBI" id="CHEBI:456216"/>
        <dbReference type="EC" id="3.6.4.13"/>
    </reaction>
</comment>
<comment type="subunit">
    <text evidence="1">Interacts with the SSU processome.</text>
</comment>
<comment type="subcellular location">
    <subcellularLocation>
        <location evidence="5">Nucleus</location>
    </subcellularLocation>
</comment>
<comment type="domain">
    <text evidence="5">The Q motif is unique to and characteristic of the DEAD box family of RNA helicases and controls ATP binding and hydrolysis.</text>
</comment>
<comment type="similarity">
    <text evidence="5">Belongs to the DEAD box helicase family. DDX47/RRP3 subfamily.</text>
</comment>
<evidence type="ECO:0000250" key="1">
    <source>
        <dbReference type="UniProtKB" id="P38712"/>
    </source>
</evidence>
<evidence type="ECO:0000255" key="2">
    <source>
        <dbReference type="PROSITE-ProRule" id="PRU00541"/>
    </source>
</evidence>
<evidence type="ECO:0000255" key="3">
    <source>
        <dbReference type="PROSITE-ProRule" id="PRU00542"/>
    </source>
</evidence>
<evidence type="ECO:0000256" key="4">
    <source>
        <dbReference type="SAM" id="MobiDB-lite"/>
    </source>
</evidence>
<evidence type="ECO:0000305" key="5"/>
<protein>
    <recommendedName>
        <fullName evidence="5">ATP-dependent rRNA helicase RRP3</fullName>
        <ecNumber evidence="1">3.6.4.13</ecNumber>
    </recommendedName>
</protein>
<reference key="1">
    <citation type="journal article" date="2004" name="Nature">
        <title>Genome evolution in yeasts.</title>
        <authorList>
            <person name="Dujon B."/>
            <person name="Sherman D."/>
            <person name="Fischer G."/>
            <person name="Durrens P."/>
            <person name="Casaregola S."/>
            <person name="Lafontaine I."/>
            <person name="de Montigny J."/>
            <person name="Marck C."/>
            <person name="Neuveglise C."/>
            <person name="Talla E."/>
            <person name="Goffard N."/>
            <person name="Frangeul L."/>
            <person name="Aigle M."/>
            <person name="Anthouard V."/>
            <person name="Babour A."/>
            <person name="Barbe V."/>
            <person name="Barnay S."/>
            <person name="Blanchin S."/>
            <person name="Beckerich J.-M."/>
            <person name="Beyne E."/>
            <person name="Bleykasten C."/>
            <person name="Boisrame A."/>
            <person name="Boyer J."/>
            <person name="Cattolico L."/>
            <person name="Confanioleri F."/>
            <person name="de Daruvar A."/>
            <person name="Despons L."/>
            <person name="Fabre E."/>
            <person name="Fairhead C."/>
            <person name="Ferry-Dumazet H."/>
            <person name="Groppi A."/>
            <person name="Hantraye F."/>
            <person name="Hennequin C."/>
            <person name="Jauniaux N."/>
            <person name="Joyet P."/>
            <person name="Kachouri R."/>
            <person name="Kerrest A."/>
            <person name="Koszul R."/>
            <person name="Lemaire M."/>
            <person name="Lesur I."/>
            <person name="Ma L."/>
            <person name="Muller H."/>
            <person name="Nicaud J.-M."/>
            <person name="Nikolski M."/>
            <person name="Oztas S."/>
            <person name="Ozier-Kalogeropoulos O."/>
            <person name="Pellenz S."/>
            <person name="Potier S."/>
            <person name="Richard G.-F."/>
            <person name="Straub M.-L."/>
            <person name="Suleau A."/>
            <person name="Swennen D."/>
            <person name="Tekaia F."/>
            <person name="Wesolowski-Louvel M."/>
            <person name="Westhof E."/>
            <person name="Wirth B."/>
            <person name="Zeniou-Meyer M."/>
            <person name="Zivanovic Y."/>
            <person name="Bolotin-Fukuhara M."/>
            <person name="Thierry A."/>
            <person name="Bouchier C."/>
            <person name="Caudron B."/>
            <person name="Scarpelli C."/>
            <person name="Gaillardin C."/>
            <person name="Weissenbach J."/>
            <person name="Wincker P."/>
            <person name="Souciet J.-L."/>
        </authorList>
    </citation>
    <scope>NUCLEOTIDE SEQUENCE [LARGE SCALE GENOMIC DNA]</scope>
    <source>
        <strain>ATCC 2001 / BCRC 20586 / JCM 3761 / NBRC 0622 / NRRL Y-65 / CBS 138</strain>
    </source>
</reference>
<feature type="chain" id="PRO_0000232271" description="ATP-dependent rRNA helicase RRP3">
    <location>
        <begin position="1"/>
        <end position="493"/>
    </location>
</feature>
<feature type="domain" description="Helicase ATP-binding" evidence="2">
    <location>
        <begin position="104"/>
        <end position="276"/>
    </location>
</feature>
<feature type="domain" description="Helicase C-terminal" evidence="3">
    <location>
        <begin position="307"/>
        <end position="453"/>
    </location>
</feature>
<feature type="region of interest" description="Disordered" evidence="4">
    <location>
        <begin position="26"/>
        <end position="68"/>
    </location>
</feature>
<feature type="region of interest" description="Disordered" evidence="4">
    <location>
        <begin position="467"/>
        <end position="493"/>
    </location>
</feature>
<feature type="short sequence motif" description="Q motif" evidence="5">
    <location>
        <begin position="73"/>
        <end position="101"/>
    </location>
</feature>
<feature type="short sequence motif" description="DEAD box" evidence="5">
    <location>
        <begin position="223"/>
        <end position="226"/>
    </location>
</feature>
<feature type="compositionally biased region" description="Basic and acidic residues" evidence="4">
    <location>
        <begin position="26"/>
        <end position="42"/>
    </location>
</feature>
<feature type="compositionally biased region" description="Basic and acidic residues" evidence="4">
    <location>
        <begin position="51"/>
        <end position="62"/>
    </location>
</feature>
<feature type="compositionally biased region" description="Basic and acidic residues" evidence="4">
    <location>
        <begin position="483"/>
        <end position="493"/>
    </location>
</feature>
<feature type="binding site" evidence="2">
    <location>
        <begin position="117"/>
        <end position="124"/>
    </location>
    <ligand>
        <name>ATP</name>
        <dbReference type="ChEBI" id="CHEBI:30616"/>
    </ligand>
</feature>
<sequence>MAGKVGKVSKKSDDVSSLAAKIRARALENQKKMQAASRKDSESDSSDEEVERPAKKQAKDEKVEEPEEEVTFESFAQLNLVPELIQACQNLNFTKPTPIQARAIPPALAGSDVIGLAQTGSGKTAAFAIPILNKLWEDQQPYYACVLAPTRELAQQIKETFDSLGSLMGVRTTCIVGGMNMMDQARDLMRKPHIIIATPGRLMDHLENTKGFSLKNLKFLVMDEADRLLDMEFGPVLDRILKIIPTKGRTTYLFSATMTSKIDKLQRASLTNPVKCAVSNKYQTVDTLVQTLMVVPGGLKNTFLIYLLNEFIGKTVIIFTRTKANAERLSGLCNLLEFSATALHGDLNQNQRTGALDLFKAGKRSILVATDVAARGLDIPSVDIVINYDIPVDSKSYIHRVGRTARAGRSGKSISLVSQYDLELILRIEEVLGKKLPKESVDKNIILTLRDSVDKANGEVVMEMNRRNKEKQARGKGRRGRMMAKENMDREEK</sequence>
<name>RRP3_CANGA</name>
<proteinExistence type="inferred from homology"/>